<dbReference type="EMBL" id="AE017282">
    <property type="protein sequence ID" value="AAU92212.1"/>
    <property type="molecule type" value="Genomic_DNA"/>
</dbReference>
<dbReference type="RefSeq" id="WP_010960813.1">
    <property type="nucleotide sequence ID" value="NC_002977.6"/>
</dbReference>
<dbReference type="SMR" id="Q608F1"/>
<dbReference type="STRING" id="243233.MCA1541"/>
<dbReference type="GeneID" id="88223812"/>
<dbReference type="KEGG" id="mca:MCA1541"/>
<dbReference type="eggNOG" id="COG2938">
    <property type="taxonomic scope" value="Bacteria"/>
</dbReference>
<dbReference type="HOGENOM" id="CLU_103054_2_2_6"/>
<dbReference type="Proteomes" id="UP000006821">
    <property type="component" value="Chromosome"/>
</dbReference>
<dbReference type="GO" id="GO:0005737">
    <property type="term" value="C:cytoplasm"/>
    <property type="evidence" value="ECO:0007669"/>
    <property type="project" value="UniProtKB-SubCell"/>
</dbReference>
<dbReference type="GO" id="GO:0006105">
    <property type="term" value="P:succinate metabolic process"/>
    <property type="evidence" value="ECO:0007669"/>
    <property type="project" value="TreeGrafter"/>
</dbReference>
<dbReference type="Gene3D" id="1.10.150.250">
    <property type="entry name" value="Flavinator of succinate dehydrogenase"/>
    <property type="match status" value="1"/>
</dbReference>
<dbReference type="InterPro" id="IPR005631">
    <property type="entry name" value="SDH"/>
</dbReference>
<dbReference type="InterPro" id="IPR036714">
    <property type="entry name" value="SDH_sf"/>
</dbReference>
<dbReference type="InterPro" id="IPR050531">
    <property type="entry name" value="SdhE_FAD_assembly_factor"/>
</dbReference>
<dbReference type="PANTHER" id="PTHR39585">
    <property type="entry name" value="FAD ASSEMBLY FACTOR SDHE"/>
    <property type="match status" value="1"/>
</dbReference>
<dbReference type="PANTHER" id="PTHR39585:SF1">
    <property type="entry name" value="FAD ASSEMBLY FACTOR SDHE"/>
    <property type="match status" value="1"/>
</dbReference>
<dbReference type="Pfam" id="PF03937">
    <property type="entry name" value="Sdh5"/>
    <property type="match status" value="1"/>
</dbReference>
<dbReference type="SUPFAM" id="SSF109910">
    <property type="entry name" value="YgfY-like"/>
    <property type="match status" value="1"/>
</dbReference>
<protein>
    <recommendedName>
        <fullName>FAD assembly factor SdhE</fullName>
    </recommendedName>
</protein>
<organism>
    <name type="scientific">Methylococcus capsulatus (strain ATCC 33009 / NCIMB 11132 / Bath)</name>
    <dbReference type="NCBI Taxonomy" id="243233"/>
    <lineage>
        <taxon>Bacteria</taxon>
        <taxon>Pseudomonadati</taxon>
        <taxon>Pseudomonadota</taxon>
        <taxon>Gammaproteobacteria</taxon>
        <taxon>Methylococcales</taxon>
        <taxon>Methylococcaceae</taxon>
        <taxon>Methylococcus</taxon>
    </lineage>
</organism>
<gene>
    <name type="primary">sdhE</name>
    <name type="ordered locus">MCA1541</name>
</gene>
<sequence length="83" mass="9242">MSQRGRLLWSCRRGMAELDRVLALYVHGAYQEADVSERQAFERLLDLQDADLWRCLTGLARPEDPALAALAAKLRALVGQAAC</sequence>
<name>SDHE_METCA</name>
<keyword id="KW-0143">Chaperone</keyword>
<keyword id="KW-0963">Cytoplasm</keyword>
<keyword id="KW-1185">Reference proteome</keyword>
<feature type="chain" id="PRO_0000214406" description="FAD assembly factor SdhE">
    <location>
        <begin position="1"/>
        <end position="83"/>
    </location>
</feature>
<reference key="1">
    <citation type="journal article" date="2004" name="PLoS Biol.">
        <title>Genomic insights into methanotrophy: the complete genome sequence of Methylococcus capsulatus (Bath).</title>
        <authorList>
            <person name="Ward N.L."/>
            <person name="Larsen O."/>
            <person name="Sakwa J."/>
            <person name="Bruseth L."/>
            <person name="Khouri H.M."/>
            <person name="Durkin A.S."/>
            <person name="Dimitrov G."/>
            <person name="Jiang L."/>
            <person name="Scanlan D."/>
            <person name="Kang K.H."/>
            <person name="Lewis M.R."/>
            <person name="Nelson K.E."/>
            <person name="Methe B.A."/>
            <person name="Wu M."/>
            <person name="Heidelberg J.F."/>
            <person name="Paulsen I.T."/>
            <person name="Fouts D.E."/>
            <person name="Ravel J."/>
            <person name="Tettelin H."/>
            <person name="Ren Q."/>
            <person name="Read T.D."/>
            <person name="DeBoy R.T."/>
            <person name="Seshadri R."/>
            <person name="Salzberg S.L."/>
            <person name="Jensen H.B."/>
            <person name="Birkeland N.K."/>
            <person name="Nelson W.C."/>
            <person name="Dodson R.J."/>
            <person name="Grindhaug S.H."/>
            <person name="Holt I.E."/>
            <person name="Eidhammer I."/>
            <person name="Jonasen I."/>
            <person name="Vanaken S."/>
            <person name="Utterback T.R."/>
            <person name="Feldblyum T.V."/>
            <person name="Fraser C.M."/>
            <person name="Lillehaug J.R."/>
            <person name="Eisen J.A."/>
        </authorList>
    </citation>
    <scope>NUCLEOTIDE SEQUENCE [LARGE SCALE GENOMIC DNA]</scope>
    <source>
        <strain>ATCC 33009 / NCIMB 11132 / Bath</strain>
    </source>
</reference>
<evidence type="ECO:0000250" key="1">
    <source>
        <dbReference type="UniProtKB" id="G4V4G2"/>
    </source>
</evidence>
<evidence type="ECO:0000305" key="2"/>
<proteinExistence type="inferred from homology"/>
<accession>Q608F1</accession>
<comment type="function">
    <text evidence="1">An FAD assembly protein, which accelerates covalent attachment of the cofactor into other proteins. Plays an essential role in the assembly of succinate dehydrogenase (SDH, respiratory complex II), an enzyme complex that is a component of both the tricarboxylic acid cycle and the electron transport chain, and which couples the oxidation of succinate to fumarate with the reduction of ubiquinone (coenzyme Q) to ubiquinol. Required for flavinylation (covalent attachment of FAD) of the flavoprotein subunit SdhA of SDH and other flavinylated proteins as well.</text>
</comment>
<comment type="subcellular location">
    <subcellularLocation>
        <location evidence="1">Cytoplasm</location>
    </subcellularLocation>
</comment>
<comment type="similarity">
    <text evidence="2">Belongs to the SdhE FAD assembly factor family.</text>
</comment>